<keyword id="KW-0436">Ligase</keyword>
<keyword id="KW-0547">Nucleotide-binding</keyword>
<keyword id="KW-0816">Tricarboxylic acid cycle</keyword>
<dbReference type="EC" id="6.2.1.5" evidence="1"/>
<dbReference type="EMBL" id="BA000018">
    <property type="protein sequence ID" value="BAB42341.1"/>
    <property type="molecule type" value="Genomic_DNA"/>
</dbReference>
<dbReference type="PIR" id="A89898">
    <property type="entry name" value="A89898"/>
</dbReference>
<dbReference type="RefSeq" id="WP_000110253.1">
    <property type="nucleotide sequence ID" value="NC_002745.2"/>
</dbReference>
<dbReference type="SMR" id="P99070"/>
<dbReference type="EnsemblBacteria" id="BAB42341">
    <property type="protein sequence ID" value="BAB42341"/>
    <property type="gene ID" value="BAB42341"/>
</dbReference>
<dbReference type="GeneID" id="98345561"/>
<dbReference type="KEGG" id="sau:SA1089"/>
<dbReference type="HOGENOM" id="CLU_052104_0_0_9"/>
<dbReference type="UniPathway" id="UPA00223">
    <property type="reaction ID" value="UER00999"/>
</dbReference>
<dbReference type="GO" id="GO:0005829">
    <property type="term" value="C:cytosol"/>
    <property type="evidence" value="ECO:0007669"/>
    <property type="project" value="TreeGrafter"/>
</dbReference>
<dbReference type="GO" id="GO:0009361">
    <property type="term" value="C:succinate-CoA ligase complex (ADP-forming)"/>
    <property type="evidence" value="ECO:0007669"/>
    <property type="project" value="TreeGrafter"/>
</dbReference>
<dbReference type="GO" id="GO:0000166">
    <property type="term" value="F:nucleotide binding"/>
    <property type="evidence" value="ECO:0007669"/>
    <property type="project" value="UniProtKB-KW"/>
</dbReference>
<dbReference type="GO" id="GO:0004775">
    <property type="term" value="F:succinate-CoA ligase (ADP-forming) activity"/>
    <property type="evidence" value="ECO:0007669"/>
    <property type="project" value="UniProtKB-UniRule"/>
</dbReference>
<dbReference type="GO" id="GO:0004776">
    <property type="term" value="F:succinate-CoA ligase (GDP-forming) activity"/>
    <property type="evidence" value="ECO:0007669"/>
    <property type="project" value="TreeGrafter"/>
</dbReference>
<dbReference type="GO" id="GO:0006099">
    <property type="term" value="P:tricarboxylic acid cycle"/>
    <property type="evidence" value="ECO:0007669"/>
    <property type="project" value="UniProtKB-UniRule"/>
</dbReference>
<dbReference type="FunFam" id="3.40.50.261:FF:000002">
    <property type="entry name" value="Succinate--CoA ligase [ADP-forming] subunit alpha"/>
    <property type="match status" value="1"/>
</dbReference>
<dbReference type="FunFam" id="3.40.50.720:FF:000002">
    <property type="entry name" value="Succinate--CoA ligase [ADP-forming] subunit alpha"/>
    <property type="match status" value="1"/>
</dbReference>
<dbReference type="Gene3D" id="3.40.50.720">
    <property type="entry name" value="NAD(P)-binding Rossmann-like Domain"/>
    <property type="match status" value="1"/>
</dbReference>
<dbReference type="Gene3D" id="3.40.50.261">
    <property type="entry name" value="Succinyl-CoA synthetase domains"/>
    <property type="match status" value="1"/>
</dbReference>
<dbReference type="HAMAP" id="MF_01988">
    <property type="entry name" value="Succ_CoA_alpha"/>
    <property type="match status" value="1"/>
</dbReference>
<dbReference type="InterPro" id="IPR017440">
    <property type="entry name" value="Cit_synth/succinyl-CoA_lig_AS"/>
</dbReference>
<dbReference type="InterPro" id="IPR033847">
    <property type="entry name" value="Citrt_syn/SCS-alpha_CS"/>
</dbReference>
<dbReference type="InterPro" id="IPR003781">
    <property type="entry name" value="CoA-bd"/>
</dbReference>
<dbReference type="InterPro" id="IPR005810">
    <property type="entry name" value="CoA_lig_alpha"/>
</dbReference>
<dbReference type="InterPro" id="IPR036291">
    <property type="entry name" value="NAD(P)-bd_dom_sf"/>
</dbReference>
<dbReference type="InterPro" id="IPR005811">
    <property type="entry name" value="SUCC_ACL_C"/>
</dbReference>
<dbReference type="InterPro" id="IPR016102">
    <property type="entry name" value="Succinyl-CoA_synth-like"/>
</dbReference>
<dbReference type="NCBIfam" id="NF004230">
    <property type="entry name" value="PRK05678.1"/>
    <property type="match status" value="1"/>
</dbReference>
<dbReference type="NCBIfam" id="TIGR01019">
    <property type="entry name" value="sucCoAalpha"/>
    <property type="match status" value="1"/>
</dbReference>
<dbReference type="PANTHER" id="PTHR11117:SF2">
    <property type="entry name" value="SUCCINATE--COA LIGASE [ADP_GDP-FORMING] SUBUNIT ALPHA, MITOCHONDRIAL"/>
    <property type="match status" value="1"/>
</dbReference>
<dbReference type="PANTHER" id="PTHR11117">
    <property type="entry name" value="SUCCINYL-COA LIGASE SUBUNIT ALPHA"/>
    <property type="match status" value="1"/>
</dbReference>
<dbReference type="Pfam" id="PF02629">
    <property type="entry name" value="CoA_binding"/>
    <property type="match status" value="1"/>
</dbReference>
<dbReference type="Pfam" id="PF00549">
    <property type="entry name" value="Ligase_CoA"/>
    <property type="match status" value="1"/>
</dbReference>
<dbReference type="PIRSF" id="PIRSF001553">
    <property type="entry name" value="SucCS_alpha"/>
    <property type="match status" value="1"/>
</dbReference>
<dbReference type="PRINTS" id="PR01798">
    <property type="entry name" value="SCOASYNTHASE"/>
</dbReference>
<dbReference type="SMART" id="SM00881">
    <property type="entry name" value="CoA_binding"/>
    <property type="match status" value="1"/>
</dbReference>
<dbReference type="SUPFAM" id="SSF51735">
    <property type="entry name" value="NAD(P)-binding Rossmann-fold domains"/>
    <property type="match status" value="1"/>
</dbReference>
<dbReference type="SUPFAM" id="SSF52210">
    <property type="entry name" value="Succinyl-CoA synthetase domains"/>
    <property type="match status" value="1"/>
</dbReference>
<dbReference type="PROSITE" id="PS01216">
    <property type="entry name" value="SUCCINYL_COA_LIG_1"/>
    <property type="match status" value="1"/>
</dbReference>
<dbReference type="PROSITE" id="PS00399">
    <property type="entry name" value="SUCCINYL_COA_LIG_2"/>
    <property type="match status" value="1"/>
</dbReference>
<proteinExistence type="evidence at protein level"/>
<organism>
    <name type="scientific">Staphylococcus aureus (strain N315)</name>
    <dbReference type="NCBI Taxonomy" id="158879"/>
    <lineage>
        <taxon>Bacteria</taxon>
        <taxon>Bacillati</taxon>
        <taxon>Bacillota</taxon>
        <taxon>Bacilli</taxon>
        <taxon>Bacillales</taxon>
        <taxon>Staphylococcaceae</taxon>
        <taxon>Staphylococcus</taxon>
    </lineage>
</organism>
<feature type="chain" id="PRO_0000102801" description="Succinate--CoA ligase [ADP-forming] subunit alpha">
    <location>
        <begin position="1"/>
        <end position="302"/>
    </location>
</feature>
<feature type="active site" description="Tele-phosphohistidine intermediate" evidence="1">
    <location>
        <position position="247"/>
    </location>
</feature>
<feature type="binding site" evidence="1">
    <location>
        <begin position="17"/>
        <end position="20"/>
    </location>
    <ligand>
        <name>CoA</name>
        <dbReference type="ChEBI" id="CHEBI:57287"/>
    </ligand>
</feature>
<feature type="binding site" evidence="1">
    <location>
        <position position="43"/>
    </location>
    <ligand>
        <name>CoA</name>
        <dbReference type="ChEBI" id="CHEBI:57287"/>
    </ligand>
</feature>
<feature type="binding site" evidence="1">
    <location>
        <begin position="96"/>
        <end position="98"/>
    </location>
    <ligand>
        <name>CoA</name>
        <dbReference type="ChEBI" id="CHEBI:57287"/>
    </ligand>
</feature>
<feature type="binding site" evidence="1">
    <location>
        <position position="159"/>
    </location>
    <ligand>
        <name>substrate</name>
        <note>ligand shared with subunit beta</note>
    </ligand>
</feature>
<evidence type="ECO:0000255" key="1">
    <source>
        <dbReference type="HAMAP-Rule" id="MF_01988"/>
    </source>
</evidence>
<accession>P99070</accession>
<accession>Q99UM4</accession>
<comment type="function">
    <text evidence="1">Succinyl-CoA synthetase functions in the citric acid cycle (TCA), coupling the hydrolysis of succinyl-CoA to the synthesis of either ATP or GTP and thus represents the only step of substrate-level phosphorylation in the TCA. The alpha subunit of the enzyme binds the substrates coenzyme A and phosphate, while succinate binding and nucleotide specificity is provided by the beta subunit.</text>
</comment>
<comment type="catalytic activity">
    <reaction evidence="1">
        <text>succinate + ATP + CoA = succinyl-CoA + ADP + phosphate</text>
        <dbReference type="Rhea" id="RHEA:17661"/>
        <dbReference type="ChEBI" id="CHEBI:30031"/>
        <dbReference type="ChEBI" id="CHEBI:30616"/>
        <dbReference type="ChEBI" id="CHEBI:43474"/>
        <dbReference type="ChEBI" id="CHEBI:57287"/>
        <dbReference type="ChEBI" id="CHEBI:57292"/>
        <dbReference type="ChEBI" id="CHEBI:456216"/>
        <dbReference type="EC" id="6.2.1.5"/>
    </reaction>
    <physiologicalReaction direction="right-to-left" evidence="1">
        <dbReference type="Rhea" id="RHEA:17663"/>
    </physiologicalReaction>
</comment>
<comment type="catalytic activity">
    <reaction evidence="1">
        <text>GTP + succinate + CoA = succinyl-CoA + GDP + phosphate</text>
        <dbReference type="Rhea" id="RHEA:22120"/>
        <dbReference type="ChEBI" id="CHEBI:30031"/>
        <dbReference type="ChEBI" id="CHEBI:37565"/>
        <dbReference type="ChEBI" id="CHEBI:43474"/>
        <dbReference type="ChEBI" id="CHEBI:57287"/>
        <dbReference type="ChEBI" id="CHEBI:57292"/>
        <dbReference type="ChEBI" id="CHEBI:58189"/>
    </reaction>
    <physiologicalReaction direction="right-to-left" evidence="1">
        <dbReference type="Rhea" id="RHEA:22122"/>
    </physiologicalReaction>
</comment>
<comment type="pathway">
    <text evidence="1">Carbohydrate metabolism; tricarboxylic acid cycle; succinate from succinyl-CoA (ligase route): step 1/1.</text>
</comment>
<comment type="subunit">
    <text evidence="1">Heterotetramer of two alpha and two beta subunits.</text>
</comment>
<comment type="similarity">
    <text evidence="1">Belongs to the succinate/malate CoA ligase alpha subunit family.</text>
</comment>
<protein>
    <recommendedName>
        <fullName evidence="1">Succinate--CoA ligase [ADP-forming] subunit alpha</fullName>
        <ecNumber evidence="1">6.2.1.5</ecNumber>
    </recommendedName>
    <alternativeName>
        <fullName evidence="1">Succinyl-CoA synthetase subunit alpha</fullName>
        <shortName evidence="1">SCS-alpha</shortName>
    </alternativeName>
</protein>
<gene>
    <name evidence="1" type="primary">sucD</name>
    <name type="ordered locus">SA1089</name>
</gene>
<sequence>MSVFIDKNTKVMVQGITGSTALFHTKQMLDYGTKIVAGVTPGKGGQVVEGVPVFNTVEEAKNETGATVSVIYVPAPFAADSILEAADADLDMVICITEHIPVLDMVKVKRYLQGRKTRLVGPNCPGVITADECKIGIMPGYIHKKGHVGVVSRSGTLTYEAVHQLTEEGIGQTTAVGIGGDPVNGTNFIDVLKAFNEDDETKAVVMIGEIGGTAEEEAAEWIKANMTKPVVGFIGGQTAPPGKRMGHAGAIISGGKGTAEEKIKTLNSCGVKTAATPSEIGSTLIEAAKEAGIYESLLTVNK</sequence>
<reference key="1">
    <citation type="journal article" date="2001" name="Lancet">
        <title>Whole genome sequencing of meticillin-resistant Staphylococcus aureus.</title>
        <authorList>
            <person name="Kuroda M."/>
            <person name="Ohta T."/>
            <person name="Uchiyama I."/>
            <person name="Baba T."/>
            <person name="Yuzawa H."/>
            <person name="Kobayashi I."/>
            <person name="Cui L."/>
            <person name="Oguchi A."/>
            <person name="Aoki K."/>
            <person name="Nagai Y."/>
            <person name="Lian J.-Q."/>
            <person name="Ito T."/>
            <person name="Kanamori M."/>
            <person name="Matsumaru H."/>
            <person name="Maruyama A."/>
            <person name="Murakami H."/>
            <person name="Hosoyama A."/>
            <person name="Mizutani-Ui Y."/>
            <person name="Takahashi N.K."/>
            <person name="Sawano T."/>
            <person name="Inoue R."/>
            <person name="Kaito C."/>
            <person name="Sekimizu K."/>
            <person name="Hirakawa H."/>
            <person name="Kuhara S."/>
            <person name="Goto S."/>
            <person name="Yabuzaki J."/>
            <person name="Kanehisa M."/>
            <person name="Yamashita A."/>
            <person name="Oshima K."/>
            <person name="Furuya K."/>
            <person name="Yoshino C."/>
            <person name="Shiba T."/>
            <person name="Hattori M."/>
            <person name="Ogasawara N."/>
            <person name="Hayashi H."/>
            <person name="Hiramatsu K."/>
        </authorList>
    </citation>
    <scope>NUCLEOTIDE SEQUENCE [LARGE SCALE GENOMIC DNA]</scope>
    <source>
        <strain>N315</strain>
    </source>
</reference>
<reference key="2">
    <citation type="journal article" date="2005" name="J. Microbiol. Methods">
        <title>Correlation of proteomic and transcriptomic profiles of Staphylococcus aureus during the post-exponential phase of growth.</title>
        <authorList>
            <person name="Scherl A."/>
            <person name="Francois P."/>
            <person name="Bento M."/>
            <person name="Deshusses J.M."/>
            <person name="Charbonnier Y."/>
            <person name="Converset V."/>
            <person name="Huyghe A."/>
            <person name="Walter N."/>
            <person name="Hoogland C."/>
            <person name="Appel R.D."/>
            <person name="Sanchez J.-C."/>
            <person name="Zimmermann-Ivol C.G."/>
            <person name="Corthals G.L."/>
            <person name="Hochstrasser D.F."/>
            <person name="Schrenzel J."/>
        </authorList>
    </citation>
    <scope>IDENTIFICATION BY MASS SPECTROMETRY</scope>
    <source>
        <strain>N315</strain>
    </source>
</reference>
<reference key="3">
    <citation type="submission" date="2007-10" db="UniProtKB">
        <title>Shotgun proteomic analysis of total and membrane protein extracts of S. aureus strain N315.</title>
        <authorList>
            <person name="Vaezzadeh A.R."/>
            <person name="Deshusses J."/>
            <person name="Lescuyer P."/>
            <person name="Hochstrasser D.F."/>
        </authorList>
    </citation>
    <scope>IDENTIFICATION BY MASS SPECTROMETRY [LARGE SCALE ANALYSIS]</scope>
    <source>
        <strain>N315</strain>
    </source>
</reference>
<name>SUCD_STAAN</name>